<accession>B5QTU7</accession>
<evidence type="ECO:0000255" key="1">
    <source>
        <dbReference type="HAMAP-Rule" id="MF_00367"/>
    </source>
</evidence>
<evidence type="ECO:0000255" key="2">
    <source>
        <dbReference type="PROSITE-ProRule" id="PRU01050"/>
    </source>
</evidence>
<proteinExistence type="inferred from homology"/>
<comment type="function">
    <text evidence="1">An essential GTPase that binds both GDP and GTP, with rapid nucleotide exchange. Plays a role in 16S rRNA processing and 30S ribosomal subunit biogenesis and possibly also in cell cycle regulation and energy metabolism.</text>
</comment>
<comment type="subunit">
    <text evidence="1">Monomer.</text>
</comment>
<comment type="subcellular location">
    <subcellularLocation>
        <location>Cytoplasm</location>
    </subcellularLocation>
    <subcellularLocation>
        <location evidence="1">Cell inner membrane</location>
        <topology evidence="1">Peripheral membrane protein</topology>
    </subcellularLocation>
</comment>
<comment type="similarity">
    <text evidence="1 2">Belongs to the TRAFAC class TrmE-Era-EngA-EngB-Septin-like GTPase superfamily. Era GTPase family.</text>
</comment>
<feature type="chain" id="PRO_1000121349" description="GTPase Era">
    <location>
        <begin position="1"/>
        <end position="301"/>
    </location>
</feature>
<feature type="domain" description="Era-type G" evidence="2">
    <location>
        <begin position="7"/>
        <end position="175"/>
    </location>
</feature>
<feature type="domain" description="KH type-2" evidence="1">
    <location>
        <begin position="206"/>
        <end position="283"/>
    </location>
</feature>
<feature type="region of interest" description="G1" evidence="2">
    <location>
        <begin position="15"/>
        <end position="22"/>
    </location>
</feature>
<feature type="region of interest" description="G2" evidence="2">
    <location>
        <begin position="41"/>
        <end position="45"/>
    </location>
</feature>
<feature type="region of interest" description="G3" evidence="2">
    <location>
        <begin position="62"/>
        <end position="65"/>
    </location>
</feature>
<feature type="region of interest" description="G4" evidence="2">
    <location>
        <begin position="124"/>
        <end position="127"/>
    </location>
</feature>
<feature type="region of interest" description="G5" evidence="2">
    <location>
        <begin position="154"/>
        <end position="156"/>
    </location>
</feature>
<feature type="binding site" evidence="1">
    <location>
        <begin position="15"/>
        <end position="22"/>
    </location>
    <ligand>
        <name>GTP</name>
        <dbReference type="ChEBI" id="CHEBI:37565"/>
    </ligand>
</feature>
<feature type="binding site" evidence="1">
    <location>
        <begin position="62"/>
        <end position="66"/>
    </location>
    <ligand>
        <name>GTP</name>
        <dbReference type="ChEBI" id="CHEBI:37565"/>
    </ligand>
</feature>
<feature type="binding site" evidence="1">
    <location>
        <begin position="124"/>
        <end position="127"/>
    </location>
    <ligand>
        <name>GTP</name>
        <dbReference type="ChEBI" id="CHEBI:37565"/>
    </ligand>
</feature>
<gene>
    <name evidence="1" type="primary">era</name>
    <name type="ordered locus">SEN2560</name>
</gene>
<protein>
    <recommendedName>
        <fullName evidence="1">GTPase Era</fullName>
    </recommendedName>
</protein>
<reference key="1">
    <citation type="journal article" date="2008" name="Genome Res.">
        <title>Comparative genome analysis of Salmonella enteritidis PT4 and Salmonella gallinarum 287/91 provides insights into evolutionary and host adaptation pathways.</title>
        <authorList>
            <person name="Thomson N.R."/>
            <person name="Clayton D.J."/>
            <person name="Windhorst D."/>
            <person name="Vernikos G."/>
            <person name="Davidson S."/>
            <person name="Churcher C."/>
            <person name="Quail M.A."/>
            <person name="Stevens M."/>
            <person name="Jones M.A."/>
            <person name="Watson M."/>
            <person name="Barron A."/>
            <person name="Layton A."/>
            <person name="Pickard D."/>
            <person name="Kingsley R.A."/>
            <person name="Bignell A."/>
            <person name="Clark L."/>
            <person name="Harris B."/>
            <person name="Ormond D."/>
            <person name="Abdellah Z."/>
            <person name="Brooks K."/>
            <person name="Cherevach I."/>
            <person name="Chillingworth T."/>
            <person name="Woodward J."/>
            <person name="Norberczak H."/>
            <person name="Lord A."/>
            <person name="Arrowsmith C."/>
            <person name="Jagels K."/>
            <person name="Moule S."/>
            <person name="Mungall K."/>
            <person name="Saunders M."/>
            <person name="Whitehead S."/>
            <person name="Chabalgoity J.A."/>
            <person name="Maskell D."/>
            <person name="Humphreys T."/>
            <person name="Roberts M."/>
            <person name="Barrow P.A."/>
            <person name="Dougan G."/>
            <person name="Parkhill J."/>
        </authorList>
    </citation>
    <scope>NUCLEOTIDE SEQUENCE [LARGE SCALE GENOMIC DNA]</scope>
    <source>
        <strain>P125109</strain>
    </source>
</reference>
<name>ERA_SALEP</name>
<sequence>MSTDKTYCGFIAIVGRPNVGKSTLLNKLLGQKISITSRKAQTTRHRIVGIHTEGPYQAIYVDTPGLHMEEKRAINRLMNKAASSSIGDVELVIFVVEGTRWTPDDEMVLNKLRDGKAPVILAVNKVDNVQEKADLLPHLQFLASQMNFLDIVPISAETGMNVDTIAGIVRKHLPEAIHHFPEDYITDRSQRFMASEIIREKLMRFLGAELPYSVTVEIERFVTNERGGYDINGLILVEREGQKKMVIGNKGAKIKTIGIEARKDMQEMFEAPVHLELWVKVKSGWADDERALRSLGYVDDL</sequence>
<keyword id="KW-0997">Cell inner membrane</keyword>
<keyword id="KW-1003">Cell membrane</keyword>
<keyword id="KW-0963">Cytoplasm</keyword>
<keyword id="KW-0342">GTP-binding</keyword>
<keyword id="KW-0472">Membrane</keyword>
<keyword id="KW-0547">Nucleotide-binding</keyword>
<keyword id="KW-0690">Ribosome biogenesis</keyword>
<keyword id="KW-0694">RNA-binding</keyword>
<keyword id="KW-0699">rRNA-binding</keyword>
<dbReference type="EMBL" id="AM933172">
    <property type="protein sequence ID" value="CAR34142.1"/>
    <property type="molecule type" value="Genomic_DNA"/>
</dbReference>
<dbReference type="RefSeq" id="WP_000102230.1">
    <property type="nucleotide sequence ID" value="NC_011294.1"/>
</dbReference>
<dbReference type="SMR" id="B5QTU7"/>
<dbReference type="KEGG" id="set:SEN2560"/>
<dbReference type="HOGENOM" id="CLU_038009_1_2_6"/>
<dbReference type="Proteomes" id="UP000000613">
    <property type="component" value="Chromosome"/>
</dbReference>
<dbReference type="GO" id="GO:0005829">
    <property type="term" value="C:cytosol"/>
    <property type="evidence" value="ECO:0007669"/>
    <property type="project" value="TreeGrafter"/>
</dbReference>
<dbReference type="GO" id="GO:0005886">
    <property type="term" value="C:plasma membrane"/>
    <property type="evidence" value="ECO:0007669"/>
    <property type="project" value="UniProtKB-SubCell"/>
</dbReference>
<dbReference type="GO" id="GO:0005525">
    <property type="term" value="F:GTP binding"/>
    <property type="evidence" value="ECO:0007669"/>
    <property type="project" value="UniProtKB-UniRule"/>
</dbReference>
<dbReference type="GO" id="GO:0003924">
    <property type="term" value="F:GTPase activity"/>
    <property type="evidence" value="ECO:0007669"/>
    <property type="project" value="UniProtKB-UniRule"/>
</dbReference>
<dbReference type="GO" id="GO:0043024">
    <property type="term" value="F:ribosomal small subunit binding"/>
    <property type="evidence" value="ECO:0007669"/>
    <property type="project" value="TreeGrafter"/>
</dbReference>
<dbReference type="GO" id="GO:0070181">
    <property type="term" value="F:small ribosomal subunit rRNA binding"/>
    <property type="evidence" value="ECO:0007669"/>
    <property type="project" value="UniProtKB-UniRule"/>
</dbReference>
<dbReference type="GO" id="GO:0000028">
    <property type="term" value="P:ribosomal small subunit assembly"/>
    <property type="evidence" value="ECO:0007669"/>
    <property type="project" value="TreeGrafter"/>
</dbReference>
<dbReference type="CDD" id="cd04163">
    <property type="entry name" value="Era"/>
    <property type="match status" value="1"/>
</dbReference>
<dbReference type="CDD" id="cd22534">
    <property type="entry name" value="KH-II_Era"/>
    <property type="match status" value="1"/>
</dbReference>
<dbReference type="FunFam" id="3.30.300.20:FF:000003">
    <property type="entry name" value="GTPase Era"/>
    <property type="match status" value="1"/>
</dbReference>
<dbReference type="FunFam" id="3.40.50.300:FF:000094">
    <property type="entry name" value="GTPase Era"/>
    <property type="match status" value="1"/>
</dbReference>
<dbReference type="Gene3D" id="3.30.300.20">
    <property type="match status" value="1"/>
</dbReference>
<dbReference type="Gene3D" id="3.40.50.300">
    <property type="entry name" value="P-loop containing nucleotide triphosphate hydrolases"/>
    <property type="match status" value="1"/>
</dbReference>
<dbReference type="HAMAP" id="MF_00367">
    <property type="entry name" value="GTPase_Era"/>
    <property type="match status" value="1"/>
</dbReference>
<dbReference type="InterPro" id="IPR030388">
    <property type="entry name" value="G_ERA_dom"/>
</dbReference>
<dbReference type="InterPro" id="IPR006073">
    <property type="entry name" value="GTP-bd"/>
</dbReference>
<dbReference type="InterPro" id="IPR005662">
    <property type="entry name" value="GTPase_Era-like"/>
</dbReference>
<dbReference type="InterPro" id="IPR015946">
    <property type="entry name" value="KH_dom-like_a/b"/>
</dbReference>
<dbReference type="InterPro" id="IPR004044">
    <property type="entry name" value="KH_dom_type_2"/>
</dbReference>
<dbReference type="InterPro" id="IPR009019">
    <property type="entry name" value="KH_sf_prok-type"/>
</dbReference>
<dbReference type="InterPro" id="IPR027417">
    <property type="entry name" value="P-loop_NTPase"/>
</dbReference>
<dbReference type="InterPro" id="IPR005225">
    <property type="entry name" value="Small_GTP-bd"/>
</dbReference>
<dbReference type="NCBIfam" id="TIGR00436">
    <property type="entry name" value="era"/>
    <property type="match status" value="1"/>
</dbReference>
<dbReference type="NCBIfam" id="NF000908">
    <property type="entry name" value="PRK00089.1"/>
    <property type="match status" value="1"/>
</dbReference>
<dbReference type="NCBIfam" id="TIGR00231">
    <property type="entry name" value="small_GTP"/>
    <property type="match status" value="1"/>
</dbReference>
<dbReference type="PANTHER" id="PTHR42698">
    <property type="entry name" value="GTPASE ERA"/>
    <property type="match status" value="1"/>
</dbReference>
<dbReference type="PANTHER" id="PTHR42698:SF1">
    <property type="entry name" value="GTPASE ERA, MITOCHONDRIAL"/>
    <property type="match status" value="1"/>
</dbReference>
<dbReference type="Pfam" id="PF07650">
    <property type="entry name" value="KH_2"/>
    <property type="match status" value="1"/>
</dbReference>
<dbReference type="Pfam" id="PF01926">
    <property type="entry name" value="MMR_HSR1"/>
    <property type="match status" value="1"/>
</dbReference>
<dbReference type="SUPFAM" id="SSF52540">
    <property type="entry name" value="P-loop containing nucleoside triphosphate hydrolases"/>
    <property type="match status" value="1"/>
</dbReference>
<dbReference type="SUPFAM" id="SSF54814">
    <property type="entry name" value="Prokaryotic type KH domain (KH-domain type II)"/>
    <property type="match status" value="1"/>
</dbReference>
<dbReference type="PROSITE" id="PS51713">
    <property type="entry name" value="G_ERA"/>
    <property type="match status" value="1"/>
</dbReference>
<dbReference type="PROSITE" id="PS50823">
    <property type="entry name" value="KH_TYPE_2"/>
    <property type="match status" value="1"/>
</dbReference>
<organism>
    <name type="scientific">Salmonella enteritidis PT4 (strain P125109)</name>
    <dbReference type="NCBI Taxonomy" id="550537"/>
    <lineage>
        <taxon>Bacteria</taxon>
        <taxon>Pseudomonadati</taxon>
        <taxon>Pseudomonadota</taxon>
        <taxon>Gammaproteobacteria</taxon>
        <taxon>Enterobacterales</taxon>
        <taxon>Enterobacteriaceae</taxon>
        <taxon>Salmonella</taxon>
    </lineage>
</organism>